<accession>Q72ER4</accession>
<organism>
    <name type="scientific">Nitratidesulfovibrio vulgaris (strain ATCC 29579 / DSM 644 / CCUG 34227 / NCIMB 8303 / VKM B-1760 / Hildenborough)</name>
    <name type="common">Desulfovibrio vulgaris</name>
    <dbReference type="NCBI Taxonomy" id="882"/>
    <lineage>
        <taxon>Bacteria</taxon>
        <taxon>Pseudomonadati</taxon>
        <taxon>Thermodesulfobacteriota</taxon>
        <taxon>Desulfovibrionia</taxon>
        <taxon>Desulfovibrionales</taxon>
        <taxon>Desulfovibrionaceae</taxon>
        <taxon>Nitratidesulfovibrio</taxon>
    </lineage>
</organism>
<name>TRUB_NITV2</name>
<proteinExistence type="inferred from homology"/>
<protein>
    <recommendedName>
        <fullName evidence="1">tRNA pseudouridine synthase B</fullName>
        <ecNumber evidence="1">5.4.99.25</ecNumber>
    </recommendedName>
    <alternativeName>
        <fullName evidence="1">tRNA pseudouridine(55) synthase</fullName>
        <shortName evidence="1">Psi55 synthase</shortName>
    </alternativeName>
    <alternativeName>
        <fullName evidence="1">tRNA pseudouridylate synthase</fullName>
    </alternativeName>
    <alternativeName>
        <fullName evidence="1">tRNA-uridine isomerase</fullName>
    </alternativeName>
</protein>
<dbReference type="EC" id="5.4.99.25" evidence="1"/>
<dbReference type="EMBL" id="AE017285">
    <property type="protein sequence ID" value="AAS94987.1"/>
    <property type="molecule type" value="Genomic_DNA"/>
</dbReference>
<dbReference type="RefSeq" id="YP_009728.1">
    <property type="nucleotide sequence ID" value="NC_002937.3"/>
</dbReference>
<dbReference type="SMR" id="Q72ER4"/>
<dbReference type="STRING" id="882.DVU_0505"/>
<dbReference type="PaxDb" id="882-DVU_0505"/>
<dbReference type="EnsemblBacteria" id="AAS94987">
    <property type="protein sequence ID" value="AAS94987"/>
    <property type="gene ID" value="DVU_0505"/>
</dbReference>
<dbReference type="KEGG" id="dvu:DVU_0505"/>
<dbReference type="PATRIC" id="fig|882.5.peg.482"/>
<dbReference type="eggNOG" id="COG0130">
    <property type="taxonomic scope" value="Bacteria"/>
</dbReference>
<dbReference type="HOGENOM" id="CLU_032087_0_1_7"/>
<dbReference type="OrthoDB" id="9802309at2"/>
<dbReference type="PhylomeDB" id="Q72ER4"/>
<dbReference type="Proteomes" id="UP000002194">
    <property type="component" value="Chromosome"/>
</dbReference>
<dbReference type="GO" id="GO:0003723">
    <property type="term" value="F:RNA binding"/>
    <property type="evidence" value="ECO:0007669"/>
    <property type="project" value="InterPro"/>
</dbReference>
<dbReference type="GO" id="GO:0160148">
    <property type="term" value="F:tRNA pseudouridine(55) synthase activity"/>
    <property type="evidence" value="ECO:0007669"/>
    <property type="project" value="UniProtKB-EC"/>
</dbReference>
<dbReference type="GO" id="GO:1990481">
    <property type="term" value="P:mRNA pseudouridine synthesis"/>
    <property type="evidence" value="ECO:0007669"/>
    <property type="project" value="TreeGrafter"/>
</dbReference>
<dbReference type="GO" id="GO:0031119">
    <property type="term" value="P:tRNA pseudouridine synthesis"/>
    <property type="evidence" value="ECO:0007669"/>
    <property type="project" value="UniProtKB-UniRule"/>
</dbReference>
<dbReference type="CDD" id="cd02573">
    <property type="entry name" value="PseudoU_synth_EcTruB"/>
    <property type="match status" value="1"/>
</dbReference>
<dbReference type="Gene3D" id="3.30.2350.10">
    <property type="entry name" value="Pseudouridine synthase"/>
    <property type="match status" value="1"/>
</dbReference>
<dbReference type="HAMAP" id="MF_01080">
    <property type="entry name" value="TruB_bact"/>
    <property type="match status" value="1"/>
</dbReference>
<dbReference type="InterPro" id="IPR020103">
    <property type="entry name" value="PsdUridine_synth_cat_dom_sf"/>
</dbReference>
<dbReference type="InterPro" id="IPR002501">
    <property type="entry name" value="PsdUridine_synth_N"/>
</dbReference>
<dbReference type="InterPro" id="IPR014780">
    <property type="entry name" value="tRNA_psdUridine_synth_TruB"/>
</dbReference>
<dbReference type="NCBIfam" id="TIGR00431">
    <property type="entry name" value="TruB"/>
    <property type="match status" value="1"/>
</dbReference>
<dbReference type="PANTHER" id="PTHR13767:SF2">
    <property type="entry name" value="PSEUDOURIDYLATE SYNTHASE TRUB1"/>
    <property type="match status" value="1"/>
</dbReference>
<dbReference type="PANTHER" id="PTHR13767">
    <property type="entry name" value="TRNA-PSEUDOURIDINE SYNTHASE"/>
    <property type="match status" value="1"/>
</dbReference>
<dbReference type="Pfam" id="PF01509">
    <property type="entry name" value="TruB_N"/>
    <property type="match status" value="1"/>
</dbReference>
<dbReference type="SUPFAM" id="SSF55120">
    <property type="entry name" value="Pseudouridine synthase"/>
    <property type="match status" value="1"/>
</dbReference>
<evidence type="ECO:0000255" key="1">
    <source>
        <dbReference type="HAMAP-Rule" id="MF_01080"/>
    </source>
</evidence>
<keyword id="KW-0413">Isomerase</keyword>
<keyword id="KW-1185">Reference proteome</keyword>
<keyword id="KW-0819">tRNA processing</keyword>
<sequence>MPVQQHGLLVLDKPSGPSSAQCISKVKRLGQKKIGHAGTLDPMAGGVLLVLLGHATKISGHLMADGEKVYAGTLRLGETTDTWDAEGTVTATAPWHHVTEADVRAIVDSWLGSSEQEVPPYSAAKHQGQPLYKLSRAGRETPVKTKTVEISLAEVVWCDLPHVRFRVRCSSGTYIRSLAHSLGIRLGCGAVLTELTREYSHPFGLDMAHTLDAVLAEPGRLAERVIPITHALPHWPKVGISLQQEASVRNGIPLPYQPEMVADMPFMEGVKAILLDTREVPVALVETAIVGGRQVWAVLRGLWS</sequence>
<comment type="function">
    <text evidence="1">Responsible for synthesis of pseudouridine from uracil-55 in the psi GC loop of transfer RNAs.</text>
</comment>
<comment type="catalytic activity">
    <reaction evidence="1">
        <text>uridine(55) in tRNA = pseudouridine(55) in tRNA</text>
        <dbReference type="Rhea" id="RHEA:42532"/>
        <dbReference type="Rhea" id="RHEA-COMP:10101"/>
        <dbReference type="Rhea" id="RHEA-COMP:10102"/>
        <dbReference type="ChEBI" id="CHEBI:65314"/>
        <dbReference type="ChEBI" id="CHEBI:65315"/>
        <dbReference type="EC" id="5.4.99.25"/>
    </reaction>
</comment>
<comment type="similarity">
    <text evidence="1">Belongs to the pseudouridine synthase TruB family. Type 1 subfamily.</text>
</comment>
<feature type="chain" id="PRO_0000121829" description="tRNA pseudouridine synthase B">
    <location>
        <begin position="1"/>
        <end position="304"/>
    </location>
</feature>
<feature type="active site" description="Nucleophile" evidence="1">
    <location>
        <position position="41"/>
    </location>
</feature>
<reference key="1">
    <citation type="journal article" date="2004" name="Nat. Biotechnol.">
        <title>The genome sequence of the anaerobic, sulfate-reducing bacterium Desulfovibrio vulgaris Hildenborough.</title>
        <authorList>
            <person name="Heidelberg J.F."/>
            <person name="Seshadri R."/>
            <person name="Haveman S.A."/>
            <person name="Hemme C.L."/>
            <person name="Paulsen I.T."/>
            <person name="Kolonay J.F."/>
            <person name="Eisen J.A."/>
            <person name="Ward N.L."/>
            <person name="Methe B.A."/>
            <person name="Brinkac L.M."/>
            <person name="Daugherty S.C."/>
            <person name="DeBoy R.T."/>
            <person name="Dodson R.J."/>
            <person name="Durkin A.S."/>
            <person name="Madupu R."/>
            <person name="Nelson W.C."/>
            <person name="Sullivan S.A."/>
            <person name="Fouts D.E."/>
            <person name="Haft D.H."/>
            <person name="Selengut J."/>
            <person name="Peterson J.D."/>
            <person name="Davidsen T.M."/>
            <person name="Zafar N."/>
            <person name="Zhou L."/>
            <person name="Radune D."/>
            <person name="Dimitrov G."/>
            <person name="Hance M."/>
            <person name="Tran K."/>
            <person name="Khouri H.M."/>
            <person name="Gill J."/>
            <person name="Utterback T.R."/>
            <person name="Feldblyum T.V."/>
            <person name="Wall J.D."/>
            <person name="Voordouw G."/>
            <person name="Fraser C.M."/>
        </authorList>
    </citation>
    <scope>NUCLEOTIDE SEQUENCE [LARGE SCALE GENOMIC DNA]</scope>
    <source>
        <strain>ATCC 29579 / DSM 644 / CCUG 34227 / NCIMB 8303 / VKM B-1760 / Hildenborough</strain>
    </source>
</reference>
<gene>
    <name evidence="1" type="primary">truB</name>
    <name type="ordered locus">DVU_0505</name>
</gene>